<gene>
    <name evidence="1" type="primary">hrcA</name>
    <name type="ordered locus">CYB_2369</name>
</gene>
<protein>
    <recommendedName>
        <fullName evidence="1">Heat-inducible transcription repressor HrcA</fullName>
    </recommendedName>
</protein>
<feature type="chain" id="PRO_1000010469" description="Heat-inducible transcription repressor HrcA">
    <location>
        <begin position="1"/>
        <end position="389"/>
    </location>
</feature>
<name>HRCA_SYNJB</name>
<accession>Q2JJ73</accession>
<dbReference type="EMBL" id="CP000240">
    <property type="protein sequence ID" value="ABD03308.1"/>
    <property type="molecule type" value="Genomic_DNA"/>
</dbReference>
<dbReference type="RefSeq" id="WP_011433937.1">
    <property type="nucleotide sequence ID" value="NC_007776.1"/>
</dbReference>
<dbReference type="SMR" id="Q2JJ73"/>
<dbReference type="STRING" id="321332.CYB_2369"/>
<dbReference type="KEGG" id="cyb:CYB_2369"/>
<dbReference type="eggNOG" id="COG1420">
    <property type="taxonomic scope" value="Bacteria"/>
</dbReference>
<dbReference type="HOGENOM" id="CLU_050019_1_0_3"/>
<dbReference type="OrthoDB" id="9783139at2"/>
<dbReference type="Proteomes" id="UP000001938">
    <property type="component" value="Chromosome"/>
</dbReference>
<dbReference type="GO" id="GO:0003677">
    <property type="term" value="F:DNA binding"/>
    <property type="evidence" value="ECO:0007669"/>
    <property type="project" value="InterPro"/>
</dbReference>
<dbReference type="GO" id="GO:0003700">
    <property type="term" value="F:DNA-binding transcription factor activity"/>
    <property type="evidence" value="ECO:0007669"/>
    <property type="project" value="InterPro"/>
</dbReference>
<dbReference type="GO" id="GO:0045892">
    <property type="term" value="P:negative regulation of DNA-templated transcription"/>
    <property type="evidence" value="ECO:0007669"/>
    <property type="project" value="UniProtKB-UniRule"/>
</dbReference>
<dbReference type="Gene3D" id="3.30.450.40">
    <property type="match status" value="1"/>
</dbReference>
<dbReference type="Gene3D" id="3.30.390.60">
    <property type="entry name" value="Heat-inducible transcription repressor hrca homolog, domain 3"/>
    <property type="match status" value="1"/>
</dbReference>
<dbReference type="Gene3D" id="1.10.10.10">
    <property type="entry name" value="Winged helix-like DNA-binding domain superfamily/Winged helix DNA-binding domain"/>
    <property type="match status" value="1"/>
</dbReference>
<dbReference type="HAMAP" id="MF_00081">
    <property type="entry name" value="HrcA"/>
    <property type="match status" value="1"/>
</dbReference>
<dbReference type="InterPro" id="IPR001034">
    <property type="entry name" value="DeoR_HTH"/>
</dbReference>
<dbReference type="InterPro" id="IPR029016">
    <property type="entry name" value="GAF-like_dom_sf"/>
</dbReference>
<dbReference type="InterPro" id="IPR002571">
    <property type="entry name" value="HrcA"/>
</dbReference>
<dbReference type="InterPro" id="IPR021153">
    <property type="entry name" value="HrcA_C"/>
</dbReference>
<dbReference type="InterPro" id="IPR036388">
    <property type="entry name" value="WH-like_DNA-bd_sf"/>
</dbReference>
<dbReference type="InterPro" id="IPR036390">
    <property type="entry name" value="WH_DNA-bd_sf"/>
</dbReference>
<dbReference type="InterPro" id="IPR023120">
    <property type="entry name" value="WHTH_transcript_rep_HrcA_IDD"/>
</dbReference>
<dbReference type="PANTHER" id="PTHR34824">
    <property type="entry name" value="HEAT-INDUCIBLE TRANSCRIPTION REPRESSOR HRCA"/>
    <property type="match status" value="1"/>
</dbReference>
<dbReference type="PANTHER" id="PTHR34824:SF1">
    <property type="entry name" value="HEAT-INDUCIBLE TRANSCRIPTION REPRESSOR HRCA"/>
    <property type="match status" value="1"/>
</dbReference>
<dbReference type="Pfam" id="PF01628">
    <property type="entry name" value="HrcA"/>
    <property type="match status" value="1"/>
</dbReference>
<dbReference type="Pfam" id="PF08220">
    <property type="entry name" value="HTH_DeoR"/>
    <property type="match status" value="1"/>
</dbReference>
<dbReference type="PIRSF" id="PIRSF005485">
    <property type="entry name" value="HrcA"/>
    <property type="match status" value="1"/>
</dbReference>
<dbReference type="SUPFAM" id="SSF55781">
    <property type="entry name" value="GAF domain-like"/>
    <property type="match status" value="1"/>
</dbReference>
<dbReference type="SUPFAM" id="SSF46785">
    <property type="entry name" value="Winged helix' DNA-binding domain"/>
    <property type="match status" value="1"/>
</dbReference>
<reference key="1">
    <citation type="journal article" date="2007" name="ISME J.">
        <title>Population level functional diversity in a microbial community revealed by comparative genomic and metagenomic analyses.</title>
        <authorList>
            <person name="Bhaya D."/>
            <person name="Grossman A.R."/>
            <person name="Steunou A.-S."/>
            <person name="Khuri N."/>
            <person name="Cohan F.M."/>
            <person name="Hamamura N."/>
            <person name="Melendrez M.C."/>
            <person name="Bateson M.M."/>
            <person name="Ward D.M."/>
            <person name="Heidelberg J.F."/>
        </authorList>
    </citation>
    <scope>NUCLEOTIDE SEQUENCE [LARGE SCALE GENOMIC DNA]</scope>
    <source>
        <strain>JA-2-3B'a(2-13)</strain>
    </source>
</reference>
<proteinExistence type="inferred from homology"/>
<keyword id="KW-1185">Reference proteome</keyword>
<keyword id="KW-0678">Repressor</keyword>
<keyword id="KW-0346">Stress response</keyword>
<keyword id="KW-0804">Transcription</keyword>
<keyword id="KW-0805">Transcription regulation</keyword>
<organism>
    <name type="scientific">Synechococcus sp. (strain JA-2-3B'a(2-13))</name>
    <name type="common">Cyanobacteria bacterium Yellowstone B-Prime</name>
    <dbReference type="NCBI Taxonomy" id="321332"/>
    <lineage>
        <taxon>Bacteria</taxon>
        <taxon>Bacillati</taxon>
        <taxon>Cyanobacteriota</taxon>
        <taxon>Cyanophyceae</taxon>
        <taxon>Synechococcales</taxon>
        <taxon>Synechococcaceae</taxon>
        <taxon>Synechococcus</taxon>
    </lineage>
</organism>
<sequence>MKLELTPRQRKILWATVRSYIATAEPVGSKTLAQSYNFGVSTATIRNDLATLEQVGLLFQPHTSAGRVPSDFGYRVYVNDLLTSANSGGIPHDAPQPDPHPALQQLMDQLGRELGDDLDSLLQRVAQLLAHLSGCIALITPPQGPVVAIHHVQLVSVAPGRVMVLVVTDSYQTHSALVSPPDWPSDSREDLEDELQLLSNFLTLKLRGKTFAELQDLSWLKLDEEFRTYGHWLQQLLRSVVQRCLQPSLGQVFSAGMAELMRQPEFSQARQVQAVMQLIEEGAKQLQGMIGLHFADGGDPQLAYLPPLPSSTEMDQESGQSARKTPVIIYIGSENPLESLHHCTVIASTYHRRSAPLGTVTLLGPTRMAYERSIAAVQAVASHLTRALA</sequence>
<evidence type="ECO:0000255" key="1">
    <source>
        <dbReference type="HAMAP-Rule" id="MF_00081"/>
    </source>
</evidence>
<comment type="function">
    <text evidence="1">Negative regulator of class I heat shock genes (grpE-dnaK-dnaJ and groELS operons). Prevents heat-shock induction of these operons.</text>
</comment>
<comment type="similarity">
    <text evidence="1">Belongs to the HrcA family.</text>
</comment>